<organism>
    <name type="scientific">Shewanella piezotolerans (strain WP3 / JCM 13877)</name>
    <dbReference type="NCBI Taxonomy" id="225849"/>
    <lineage>
        <taxon>Bacteria</taxon>
        <taxon>Pseudomonadati</taxon>
        <taxon>Pseudomonadota</taxon>
        <taxon>Gammaproteobacteria</taxon>
        <taxon>Alteromonadales</taxon>
        <taxon>Shewanellaceae</taxon>
        <taxon>Shewanella</taxon>
    </lineage>
</organism>
<proteinExistence type="inferred from homology"/>
<feature type="chain" id="PRO_1000192847" description="Phosphoglycerate kinase">
    <location>
        <begin position="1"/>
        <end position="391"/>
    </location>
</feature>
<feature type="binding site" evidence="1">
    <location>
        <begin position="21"/>
        <end position="23"/>
    </location>
    <ligand>
        <name>substrate</name>
    </ligand>
</feature>
<feature type="binding site" evidence="1">
    <location>
        <position position="36"/>
    </location>
    <ligand>
        <name>substrate</name>
    </ligand>
</feature>
<feature type="binding site" evidence="1">
    <location>
        <begin position="59"/>
        <end position="62"/>
    </location>
    <ligand>
        <name>substrate</name>
    </ligand>
</feature>
<feature type="binding site" evidence="1">
    <location>
        <position position="113"/>
    </location>
    <ligand>
        <name>substrate</name>
    </ligand>
</feature>
<feature type="binding site" evidence="1">
    <location>
        <position position="146"/>
    </location>
    <ligand>
        <name>substrate</name>
    </ligand>
</feature>
<feature type="binding site" evidence="1">
    <location>
        <position position="197"/>
    </location>
    <ligand>
        <name>ATP</name>
        <dbReference type="ChEBI" id="CHEBI:30616"/>
    </ligand>
</feature>
<feature type="binding site" evidence="1">
    <location>
        <position position="319"/>
    </location>
    <ligand>
        <name>ATP</name>
        <dbReference type="ChEBI" id="CHEBI:30616"/>
    </ligand>
</feature>
<feature type="binding site" evidence="1">
    <location>
        <begin position="345"/>
        <end position="348"/>
    </location>
    <ligand>
        <name>ATP</name>
        <dbReference type="ChEBI" id="CHEBI:30616"/>
    </ligand>
</feature>
<sequence length="391" mass="40618">MSILNMQDLELQGKRVLIREDLNVPVSDGVVTSDARLRASLPTIKLALEKGAAVMVMSHLGRPTEGEFNAEFSMQPVVNYLAKALDCPVRLASEYLDGVDVAVGEVVVFENVRFNVGEKKNDEALAKKMAALCDVYVMDAFGTAHRAQASTHGVGLHAPIACAGPLLAGELAALGKALDNPARPMVAIVGGSKVSTKLTVLESLSTKVDQLVVGGGIANTFVAAAGHNVGKSLYEADLIDEAKRLVAAAQSGGGDIPVPTDVVVAGEFSPTATATLKDVSAVSDTDMIFDIGPDSAEALAEIIKNAGTVVWNGPVGVFEFDQFGEGTKRIAQAIADSNAFSIAGGGDTLAAVDKYDIADKVSYISTGGGAFLEFLEGKELPAVAMLESRAQ</sequence>
<keyword id="KW-0067">ATP-binding</keyword>
<keyword id="KW-0963">Cytoplasm</keyword>
<keyword id="KW-0324">Glycolysis</keyword>
<keyword id="KW-0418">Kinase</keyword>
<keyword id="KW-0547">Nucleotide-binding</keyword>
<keyword id="KW-0808">Transferase</keyword>
<reference key="1">
    <citation type="journal article" date="2008" name="PLoS ONE">
        <title>Environmental adaptation: genomic analysis of the piezotolerant and psychrotolerant deep-sea iron reducing bacterium Shewanella piezotolerans WP3.</title>
        <authorList>
            <person name="Wang F."/>
            <person name="Wang J."/>
            <person name="Jian H."/>
            <person name="Zhang B."/>
            <person name="Li S."/>
            <person name="Wang F."/>
            <person name="Zeng X."/>
            <person name="Gao L."/>
            <person name="Bartlett D.H."/>
            <person name="Yu J."/>
            <person name="Hu S."/>
            <person name="Xiao X."/>
        </authorList>
    </citation>
    <scope>NUCLEOTIDE SEQUENCE [LARGE SCALE GENOMIC DNA]</scope>
    <source>
        <strain>WP3 / JCM 13877</strain>
    </source>
</reference>
<accession>B8CU40</accession>
<comment type="catalytic activity">
    <reaction evidence="1">
        <text>(2R)-3-phosphoglycerate + ATP = (2R)-3-phospho-glyceroyl phosphate + ADP</text>
        <dbReference type="Rhea" id="RHEA:14801"/>
        <dbReference type="ChEBI" id="CHEBI:30616"/>
        <dbReference type="ChEBI" id="CHEBI:57604"/>
        <dbReference type="ChEBI" id="CHEBI:58272"/>
        <dbReference type="ChEBI" id="CHEBI:456216"/>
        <dbReference type="EC" id="2.7.2.3"/>
    </reaction>
</comment>
<comment type="pathway">
    <text evidence="1">Carbohydrate degradation; glycolysis; pyruvate from D-glyceraldehyde 3-phosphate: step 2/5.</text>
</comment>
<comment type="subunit">
    <text evidence="1">Monomer.</text>
</comment>
<comment type="subcellular location">
    <subcellularLocation>
        <location evidence="1">Cytoplasm</location>
    </subcellularLocation>
</comment>
<comment type="similarity">
    <text evidence="1">Belongs to the phosphoglycerate kinase family.</text>
</comment>
<dbReference type="EC" id="2.7.2.3" evidence="1"/>
<dbReference type="EMBL" id="CP000472">
    <property type="protein sequence ID" value="ACJ30896.1"/>
    <property type="molecule type" value="Genomic_DNA"/>
</dbReference>
<dbReference type="RefSeq" id="WP_020914233.1">
    <property type="nucleotide sequence ID" value="NC_011566.1"/>
</dbReference>
<dbReference type="SMR" id="B8CU40"/>
<dbReference type="STRING" id="225849.swp_4242"/>
<dbReference type="KEGG" id="swp:swp_4242"/>
<dbReference type="eggNOG" id="COG0126">
    <property type="taxonomic scope" value="Bacteria"/>
</dbReference>
<dbReference type="HOGENOM" id="CLU_025427_0_2_6"/>
<dbReference type="OrthoDB" id="9808460at2"/>
<dbReference type="UniPathway" id="UPA00109">
    <property type="reaction ID" value="UER00185"/>
</dbReference>
<dbReference type="Proteomes" id="UP000000753">
    <property type="component" value="Chromosome"/>
</dbReference>
<dbReference type="GO" id="GO:0005829">
    <property type="term" value="C:cytosol"/>
    <property type="evidence" value="ECO:0007669"/>
    <property type="project" value="TreeGrafter"/>
</dbReference>
<dbReference type="GO" id="GO:0043531">
    <property type="term" value="F:ADP binding"/>
    <property type="evidence" value="ECO:0007669"/>
    <property type="project" value="TreeGrafter"/>
</dbReference>
<dbReference type="GO" id="GO:0005524">
    <property type="term" value="F:ATP binding"/>
    <property type="evidence" value="ECO:0007669"/>
    <property type="project" value="UniProtKB-KW"/>
</dbReference>
<dbReference type="GO" id="GO:0004618">
    <property type="term" value="F:phosphoglycerate kinase activity"/>
    <property type="evidence" value="ECO:0007669"/>
    <property type="project" value="UniProtKB-UniRule"/>
</dbReference>
<dbReference type="GO" id="GO:0006094">
    <property type="term" value="P:gluconeogenesis"/>
    <property type="evidence" value="ECO:0007669"/>
    <property type="project" value="TreeGrafter"/>
</dbReference>
<dbReference type="GO" id="GO:0006096">
    <property type="term" value="P:glycolytic process"/>
    <property type="evidence" value="ECO:0007669"/>
    <property type="project" value="UniProtKB-UniRule"/>
</dbReference>
<dbReference type="FunFam" id="3.40.50.1260:FF:000001">
    <property type="entry name" value="Phosphoglycerate kinase"/>
    <property type="match status" value="1"/>
</dbReference>
<dbReference type="FunFam" id="3.40.50.1260:FF:000002">
    <property type="entry name" value="Phosphoglycerate kinase"/>
    <property type="match status" value="1"/>
</dbReference>
<dbReference type="Gene3D" id="3.40.50.1260">
    <property type="entry name" value="Phosphoglycerate kinase, N-terminal domain"/>
    <property type="match status" value="2"/>
</dbReference>
<dbReference type="HAMAP" id="MF_00145">
    <property type="entry name" value="Phosphoglyc_kinase"/>
    <property type="match status" value="1"/>
</dbReference>
<dbReference type="InterPro" id="IPR001576">
    <property type="entry name" value="Phosphoglycerate_kinase"/>
</dbReference>
<dbReference type="InterPro" id="IPR015911">
    <property type="entry name" value="Phosphoglycerate_kinase_CS"/>
</dbReference>
<dbReference type="InterPro" id="IPR015824">
    <property type="entry name" value="Phosphoglycerate_kinase_N"/>
</dbReference>
<dbReference type="InterPro" id="IPR036043">
    <property type="entry name" value="Phosphoglycerate_kinase_sf"/>
</dbReference>
<dbReference type="PANTHER" id="PTHR11406">
    <property type="entry name" value="PHOSPHOGLYCERATE KINASE"/>
    <property type="match status" value="1"/>
</dbReference>
<dbReference type="PANTHER" id="PTHR11406:SF23">
    <property type="entry name" value="PHOSPHOGLYCERATE KINASE 1, CHLOROPLASTIC-RELATED"/>
    <property type="match status" value="1"/>
</dbReference>
<dbReference type="Pfam" id="PF00162">
    <property type="entry name" value="PGK"/>
    <property type="match status" value="1"/>
</dbReference>
<dbReference type="PIRSF" id="PIRSF000724">
    <property type="entry name" value="Pgk"/>
    <property type="match status" value="1"/>
</dbReference>
<dbReference type="PRINTS" id="PR00477">
    <property type="entry name" value="PHGLYCKINASE"/>
</dbReference>
<dbReference type="SUPFAM" id="SSF53748">
    <property type="entry name" value="Phosphoglycerate kinase"/>
    <property type="match status" value="1"/>
</dbReference>
<dbReference type="PROSITE" id="PS00111">
    <property type="entry name" value="PGLYCERATE_KINASE"/>
    <property type="match status" value="1"/>
</dbReference>
<protein>
    <recommendedName>
        <fullName evidence="1">Phosphoglycerate kinase</fullName>
        <ecNumber evidence="1">2.7.2.3</ecNumber>
    </recommendedName>
</protein>
<evidence type="ECO:0000255" key="1">
    <source>
        <dbReference type="HAMAP-Rule" id="MF_00145"/>
    </source>
</evidence>
<gene>
    <name evidence="1" type="primary">pgk</name>
    <name type="ordered locus">swp_4242</name>
</gene>
<name>PGK_SHEPW</name>